<organism>
    <name type="scientific">Mus musculus</name>
    <name type="common">Mouse</name>
    <dbReference type="NCBI Taxonomy" id="10090"/>
    <lineage>
        <taxon>Eukaryota</taxon>
        <taxon>Metazoa</taxon>
        <taxon>Chordata</taxon>
        <taxon>Craniata</taxon>
        <taxon>Vertebrata</taxon>
        <taxon>Euteleostomi</taxon>
        <taxon>Mammalia</taxon>
        <taxon>Eutheria</taxon>
        <taxon>Euarchontoglires</taxon>
        <taxon>Glires</taxon>
        <taxon>Rodentia</taxon>
        <taxon>Myomorpha</taxon>
        <taxon>Muroidea</taxon>
        <taxon>Muridae</taxon>
        <taxon>Murinae</taxon>
        <taxon>Mus</taxon>
        <taxon>Mus</taxon>
    </lineage>
</organism>
<evidence type="ECO:0000255" key="1">
    <source>
        <dbReference type="PROSITE-ProRule" id="PRU01052"/>
    </source>
</evidence>
<evidence type="ECO:0000255" key="2">
    <source>
        <dbReference type="PROSITE-ProRule" id="PRU01053"/>
    </source>
</evidence>
<evidence type="ECO:0000269" key="3">
    <source>
    </source>
</evidence>
<evidence type="ECO:0000269" key="4">
    <source>
    </source>
</evidence>
<evidence type="ECO:0000269" key="5">
    <source>
    </source>
</evidence>
<evidence type="ECO:0000269" key="6">
    <source>
    </source>
</evidence>
<evidence type="ECO:0000269" key="7">
    <source>
    </source>
</evidence>
<evidence type="ECO:0000269" key="8">
    <source>
    </source>
</evidence>
<evidence type="ECO:0000269" key="9">
    <source>
    </source>
</evidence>
<evidence type="ECO:0000269" key="10">
    <source>
    </source>
</evidence>
<evidence type="ECO:0000269" key="11">
    <source>
    </source>
</evidence>
<evidence type="ECO:0000303" key="12">
    <source>
    </source>
</evidence>
<evidence type="ECO:0000305" key="13"/>
<evidence type="ECO:0000305" key="14">
    <source>
    </source>
</evidence>
<evidence type="ECO:0000305" key="15">
    <source>
    </source>
</evidence>
<evidence type="ECO:0000312" key="16">
    <source>
        <dbReference type="MGI" id="MGI:3649299"/>
    </source>
</evidence>
<evidence type="ECO:0007744" key="17">
    <source>
        <dbReference type="PDB" id="7C3K"/>
    </source>
</evidence>
<evidence type="ECO:0007829" key="18">
    <source>
        <dbReference type="PDB" id="7C3K"/>
    </source>
</evidence>
<feature type="initiator methionine" description="Removed" evidence="14">
    <location>
        <position position="1"/>
    </location>
</feature>
<feature type="chain" id="PRO_0000457891" description="Interferon-gamma-inducible GTPase 10">
    <location>
        <begin position="2"/>
        <end position="417"/>
    </location>
</feature>
<feature type="transmembrane region" description="Helical" evidence="15">
    <location>
        <begin position="284"/>
        <end position="302"/>
    </location>
</feature>
<feature type="transmembrane region" description="Helical" evidence="15">
    <location>
        <begin position="370"/>
        <end position="387"/>
    </location>
</feature>
<feature type="domain" description="IRG-type G" evidence="2">
    <location>
        <begin position="67"/>
        <end position="249"/>
    </location>
</feature>
<feature type="binding site" evidence="10 17">
    <location>
        <position position="78"/>
    </location>
    <ligand>
        <name>GDP</name>
        <dbReference type="ChEBI" id="CHEBI:58189"/>
    </ligand>
</feature>
<feature type="binding site" evidence="10 17">
    <location>
        <position position="79"/>
    </location>
    <ligand>
        <name>GDP</name>
        <dbReference type="ChEBI" id="CHEBI:58189"/>
    </ligand>
</feature>
<feature type="binding site" evidence="10 17">
    <location>
        <position position="82"/>
    </location>
    <ligand>
        <name>GDP</name>
        <dbReference type="ChEBI" id="CHEBI:58189"/>
    </ligand>
</feature>
<feature type="binding site" evidence="10 17">
    <location>
        <position position="83"/>
    </location>
    <ligand>
        <name>GDP</name>
        <dbReference type="ChEBI" id="CHEBI:58189"/>
    </ligand>
</feature>
<feature type="binding site" evidence="10 17">
    <location>
        <position position="101"/>
    </location>
    <ligand>
        <name>GDP</name>
        <dbReference type="ChEBI" id="CHEBI:58189"/>
    </ligand>
</feature>
<feature type="binding site" evidence="10 17">
    <location>
        <position position="183"/>
    </location>
    <ligand>
        <name>GDP</name>
        <dbReference type="ChEBI" id="CHEBI:58189"/>
    </ligand>
</feature>
<feature type="binding site" evidence="10 17">
    <location>
        <position position="185"/>
    </location>
    <ligand>
        <name>GDP</name>
        <dbReference type="ChEBI" id="CHEBI:58189"/>
    </ligand>
</feature>
<feature type="binding site" evidence="10 17">
    <location>
        <position position="231"/>
    </location>
    <ligand>
        <name>GDP</name>
        <dbReference type="ChEBI" id="CHEBI:58189"/>
    </ligand>
</feature>
<feature type="lipid moiety-binding region" description="N-myristoyl glycine" evidence="14">
    <location>
        <position position="2"/>
    </location>
</feature>
<feature type="mutagenesis site" description="Abolished GTPase activity, promoting localization to lipid droplets." evidence="6">
    <original>K</original>
    <variation>A</variation>
    <location>
        <position position="81"/>
    </location>
</feature>
<feature type="mutagenesis site" description="Abolished localization to pathogen-containing vacuoles." evidence="6">
    <original>S</original>
    <variation>N</variation>
    <location>
        <position position="82"/>
    </location>
</feature>
<feature type="mutagenesis site" description="Does not affect formation of a head-to-head homodimer in presence of GDP." evidence="10">
    <original>T</original>
    <variation>W</variation>
    <location>
        <position position="132"/>
    </location>
</feature>
<feature type="mutagenesis site" description="Impaired formation of a head-to-head homodimer in presence of GDP." evidence="10">
    <original>D</original>
    <variation>R</variation>
    <location>
        <position position="185"/>
    </location>
</feature>
<feature type="mutagenesis site" description="Impaired formation of a head-to-head homodimer in presence of GDP." evidence="10">
    <original>K</original>
    <variation>E</variation>
    <location>
        <position position="193"/>
    </location>
</feature>
<feature type="mutagenesis site" description="Does not affect formation of a head-to-head homodimer in presence of GDP." evidence="10">
    <original>E</original>
    <variation>K</variation>
    <location>
        <position position="206"/>
    </location>
</feature>
<feature type="sequence conflict" description="In Ref. 1; ABF85831." evidence="13" ref="1">
    <original>M</original>
    <variation>T</variation>
    <location>
        <position position="15"/>
    </location>
</feature>
<feature type="sequence conflict" description="In Ref. 1; ABF85831." evidence="13" ref="1">
    <original>K</original>
    <variation>M</variation>
    <location>
        <position position="108"/>
    </location>
</feature>
<feature type="sequence conflict" description="In Ref. 1; ABF85831." evidence="13" ref="1">
    <original>D</original>
    <variation>N</variation>
    <location>
        <position position="161"/>
    </location>
</feature>
<feature type="helix" evidence="18">
    <location>
        <begin position="20"/>
        <end position="25"/>
    </location>
</feature>
<feature type="helix" evidence="18">
    <location>
        <begin position="28"/>
        <end position="30"/>
    </location>
</feature>
<feature type="helix" evidence="18">
    <location>
        <begin position="35"/>
        <end position="47"/>
    </location>
</feature>
<feature type="helix" evidence="18">
    <location>
        <begin position="50"/>
        <end position="65"/>
    </location>
</feature>
<feature type="strand" evidence="18">
    <location>
        <begin position="69"/>
        <end position="74"/>
    </location>
</feature>
<feature type="helix" evidence="18">
    <location>
        <begin position="81"/>
        <end position="88"/>
    </location>
</feature>
<feature type="strand" evidence="18">
    <location>
        <begin position="93"/>
        <end position="95"/>
    </location>
</feature>
<feature type="strand" evidence="18">
    <location>
        <begin position="111"/>
        <end position="115"/>
    </location>
</feature>
<feature type="strand" evidence="18">
    <location>
        <begin position="118"/>
        <end position="125"/>
    </location>
</feature>
<feature type="helix" evidence="18">
    <location>
        <begin position="136"/>
        <end position="142"/>
    </location>
</feature>
<feature type="helix" evidence="18">
    <location>
        <begin position="145"/>
        <end position="147"/>
    </location>
</feature>
<feature type="strand" evidence="18">
    <location>
        <begin position="149"/>
        <end position="158"/>
    </location>
</feature>
<feature type="helix" evidence="18">
    <location>
        <begin position="166"/>
        <end position="172"/>
    </location>
</feature>
<feature type="strand" evidence="18">
    <location>
        <begin position="176"/>
        <end position="181"/>
    </location>
</feature>
<feature type="helix" evidence="18">
    <location>
        <begin position="184"/>
        <end position="194"/>
    </location>
</feature>
<feature type="turn" evidence="18">
    <location>
        <begin position="196"/>
        <end position="198"/>
    </location>
</feature>
<feature type="helix" evidence="18">
    <location>
        <begin position="201"/>
        <end position="214"/>
    </location>
</feature>
<feature type="strand" evidence="18">
    <location>
        <begin position="226"/>
        <end position="228"/>
    </location>
</feature>
<feature type="helix" evidence="18">
    <location>
        <begin position="239"/>
        <end position="249"/>
    </location>
</feature>
<feature type="helix" evidence="18">
    <location>
        <begin position="252"/>
        <end position="254"/>
    </location>
</feature>
<feature type="helix" evidence="18">
    <location>
        <begin position="255"/>
        <end position="261"/>
    </location>
</feature>
<feature type="helix" evidence="18">
    <location>
        <begin position="267"/>
        <end position="288"/>
    </location>
</feature>
<feature type="strand" evidence="18">
    <location>
        <begin position="291"/>
        <end position="293"/>
    </location>
</feature>
<feature type="helix" evidence="18">
    <location>
        <begin position="301"/>
        <end position="317"/>
    </location>
</feature>
<feature type="helix" evidence="18">
    <location>
        <begin position="322"/>
        <end position="331"/>
    </location>
</feature>
<feature type="helix" evidence="18">
    <location>
        <begin position="336"/>
        <end position="340"/>
    </location>
</feature>
<feature type="helix" evidence="18">
    <location>
        <begin position="345"/>
        <end position="347"/>
    </location>
</feature>
<feature type="helix" evidence="18">
    <location>
        <begin position="357"/>
        <end position="372"/>
    </location>
</feature>
<feature type="helix" evidence="18">
    <location>
        <begin position="384"/>
        <end position="406"/>
    </location>
</feature>
<sequence length="417" mass="47264">MGQSSSKPDAKAHNMASSLTEFFKNFKMESKIISKETIDSIQSCIQEGDIQKVISIINAALTDIEKAPLNIAVTGETGAGKSTFINALRGIGHEESESAESGAVETTKDRKKYTHPKFPNVTIWDLPGVGTTNFKPEEYLKKMKFQEYDFFLIISSARFRDNEAQLAEAIKKMKKKFYFVRTKIDSDLWNEKKAKPSSYNREKILEVIRSDCVKNLQNANAASTRVFLVSSFEVAQFDFPSLESTLLEELPAHKRHIFVQCLPTITEPAIDRRRDVLKQTIWLEALKAGASATIPMMSFFNDDIEEFEKILSHYRACFGLDDESLENMAKEWSMSVEELESTIKSPHLLSSEPNESVADKLVKTMEKIFAVTGGFVATGLYFRKSYYMQNYFLDTVTEDAKVLLKKKVFLQDSVDSE</sequence>
<name>IRB10_MOUSE</name>
<comment type="function">
    <text evidence="3 4 7 8 9 11">Interferon (IFN)-inducible GTPase that plays important roles in innate immunity against a diverse range of bacterial, viral and protozoan pathogens by mediating cytosolic release of pathogenic ligands that activate the inflammasomes (PubMed:16959883, PubMed:20109161, PubMed:27693356, PubMed:30062052, PubMed:30510167, PubMed:34694641). Following infection, recruited to the membrane of pathogens in a GBP-dependent manner and mediates disruption of the pathogen membrane, liberating ligands that are detected by inflammasomes, such as lipopolysaccharide (LPS) that activates the non-canonical CASP4/CASP11 inflammasome or double-stranded DNA (dsDNA) that activates the AIM2 inflammasome (PubMed:27693356, PubMed:30062052, PubMed:30510167). Promotes AIM2 and NLRP3 inflammasome activation following A.fumigatus infection by liberating beta-glucan, which directly triggers inflammasome assembly (PubMed:30510167). Promotes NLRP3 inflammasome activation following influenza A virus infection (PubMed:34694641).</text>
</comment>
<comment type="catalytic activity">
    <reaction evidence="6 10">
        <text>GTP + H2O = GDP + phosphate + H(+)</text>
        <dbReference type="Rhea" id="RHEA:19669"/>
        <dbReference type="ChEBI" id="CHEBI:15377"/>
        <dbReference type="ChEBI" id="CHEBI:15378"/>
        <dbReference type="ChEBI" id="CHEBI:37565"/>
        <dbReference type="ChEBI" id="CHEBI:43474"/>
        <dbReference type="ChEBI" id="CHEBI:58189"/>
    </reaction>
    <physiologicalReaction direction="left-to-right" evidence="6 10">
        <dbReference type="Rhea" id="RHEA:19670"/>
    </physiologicalReaction>
</comment>
<comment type="subunit">
    <text evidence="6 7 10">Homooligomer; homooligomerization occurs upon GTP-binding and is required for the association with membranous structures (PubMed:23785284, PubMed:27693356). Homodimer; GDP-binding induces formation of an inactive head-to-head homodimer (PubMed:33469160).</text>
</comment>
<comment type="subcellular location">
    <subcellularLocation>
        <location evidence="7">Membrane</location>
        <topology evidence="7">Multi-pass membrane protein</topology>
    </subcellularLocation>
    <subcellularLocation>
        <location evidence="6">Cytoplasmic vesicle membrane</location>
        <topology evidence="7">Multi-pass membrane protein</topology>
    </subcellularLocation>
    <text evidence="7 14 15">Recruited to the membrane of pathogens in the cytosol in a GBP (Gbp1, Gbp2, Gbp3, Gbp5 ad/or Gbp7)-dependent manner (PubMed:27693356). Recruited to the membrane of pathogen-containing vacuoles: vacuoles may serve as a cellular transport mechanism to deliver Gm12250/Irgb10 to the pathogen membrane (Probable) (PubMed:23785284, PubMed:27693356).</text>
</comment>
<comment type="induction">
    <text evidence="3 7">By IFNG/IFN-gamma (PubMed:16959883). Induced by IRF1 in response to bacterial infection (PubMed:27693356).</text>
</comment>
<comment type="PTM">
    <text evidence="14">Myristoylation is required for localization to pathogen-containing vacuoles (PubMed:23785284).</text>
</comment>
<comment type="PTM">
    <text evidence="5">(Microbial infection) Phosphorylated by Toxoplasma gondii ROP18.</text>
</comment>
<comment type="similarity">
    <text evidence="1">Belongs to the TRAFAC class dynamin-like GTPase superfamily. GB1/RHD3 GTPase family. GB1 subfamily.</text>
</comment>
<dbReference type="EC" id="3.6.5.-" evidence="10"/>
<dbReference type="EMBL" id="DQ508486">
    <property type="protein sequence ID" value="ABF85830.1"/>
    <property type="molecule type" value="mRNA"/>
</dbReference>
<dbReference type="EMBL" id="DQ508487">
    <property type="protein sequence ID" value="ABF85831.1"/>
    <property type="molecule type" value="mRNA"/>
</dbReference>
<dbReference type="EMBL" id="AL928857">
    <property type="status" value="NOT_ANNOTATED_CDS"/>
    <property type="molecule type" value="Genomic_DNA"/>
</dbReference>
<dbReference type="RefSeq" id="NP_001128587.1">
    <property type="nucleotide sequence ID" value="NM_001135115.1"/>
</dbReference>
<dbReference type="PDB" id="7C3K">
    <property type="method" value="X-ray"/>
    <property type="resolution" value="2.60 A"/>
    <property type="chains" value="A/B=1-406"/>
</dbReference>
<dbReference type="PDBsum" id="7C3K"/>
<dbReference type="SMR" id="Q0GUM3"/>
<dbReference type="iPTMnet" id="Q0GUM3"/>
<dbReference type="PhosphoSitePlus" id="Q0GUM3"/>
<dbReference type="GeneID" id="631323"/>
<dbReference type="KEGG" id="mmu:631323"/>
<dbReference type="UCSC" id="uc011xvf.1">
    <property type="organism name" value="mouse"/>
</dbReference>
<dbReference type="AGR" id="MGI:3649299"/>
<dbReference type="MGI" id="MGI:3649299">
    <property type="gene designation" value="Gm12250"/>
</dbReference>
<dbReference type="OrthoDB" id="422720at2759"/>
<dbReference type="BioGRID-ORCS" id="631323">
    <property type="hits" value="0 hits in 10 CRISPR screens"/>
</dbReference>
<dbReference type="PRO" id="PR:Q0GUM3"/>
<dbReference type="Proteomes" id="UP000000589">
    <property type="component" value="Unplaced"/>
</dbReference>
<dbReference type="GO" id="GO:0030659">
    <property type="term" value="C:cytoplasmic vesicle membrane"/>
    <property type="evidence" value="ECO:0007669"/>
    <property type="project" value="UniProtKB-SubCell"/>
</dbReference>
<dbReference type="GO" id="GO:0106139">
    <property type="term" value="C:symbiont cell surface"/>
    <property type="evidence" value="ECO:0000314"/>
    <property type="project" value="UniProtKB"/>
</dbReference>
<dbReference type="GO" id="GO:0003925">
    <property type="term" value="F:G protein activity"/>
    <property type="evidence" value="ECO:0000314"/>
    <property type="project" value="UniProtKB"/>
</dbReference>
<dbReference type="GO" id="GO:0005525">
    <property type="term" value="F:GTP binding"/>
    <property type="evidence" value="ECO:0007669"/>
    <property type="project" value="UniProtKB-KW"/>
</dbReference>
<dbReference type="GO" id="GO:0140912">
    <property type="term" value="F:membrane destabilizing activity"/>
    <property type="evidence" value="ECO:0000314"/>
    <property type="project" value="UniProtKB"/>
</dbReference>
<dbReference type="GO" id="GO:0042742">
    <property type="term" value="P:defense response to bacterium"/>
    <property type="evidence" value="ECO:0000314"/>
    <property type="project" value="UniProtKB"/>
</dbReference>
<dbReference type="GO" id="GO:0050832">
    <property type="term" value="P:defense response to fungus"/>
    <property type="evidence" value="ECO:0000314"/>
    <property type="project" value="UniProtKB"/>
</dbReference>
<dbReference type="GO" id="GO:0042832">
    <property type="term" value="P:defense response to protozoan"/>
    <property type="evidence" value="ECO:0000314"/>
    <property type="project" value="UniProtKB"/>
</dbReference>
<dbReference type="GO" id="GO:0051607">
    <property type="term" value="P:defense response to virus"/>
    <property type="evidence" value="ECO:0000314"/>
    <property type="project" value="UniProtKB"/>
</dbReference>
<dbReference type="GO" id="GO:0051673">
    <property type="term" value="P:disruption of plasma membrane integrity in another organism"/>
    <property type="evidence" value="ECO:0000314"/>
    <property type="project" value="UniProtKB"/>
</dbReference>
<dbReference type="GO" id="GO:0045087">
    <property type="term" value="P:innate immune response"/>
    <property type="evidence" value="ECO:0007669"/>
    <property type="project" value="UniProtKB-KW"/>
</dbReference>
<dbReference type="GO" id="GO:0031640">
    <property type="term" value="P:killing of cells of another organism"/>
    <property type="evidence" value="ECO:0000314"/>
    <property type="project" value="UniProtKB"/>
</dbReference>
<dbReference type="GO" id="GO:0140973">
    <property type="term" value="P:positive regulation of AIM2 inflammasome complex assembly"/>
    <property type="evidence" value="ECO:0000314"/>
    <property type="project" value="UniProtKB"/>
</dbReference>
<dbReference type="GO" id="GO:1900227">
    <property type="term" value="P:positive regulation of NLRP3 inflammasome complex assembly"/>
    <property type="evidence" value="ECO:0000314"/>
    <property type="project" value="UniProtKB"/>
</dbReference>
<dbReference type="GO" id="GO:0140639">
    <property type="term" value="P:positive regulation of pyroptotic inflammatory response"/>
    <property type="evidence" value="ECO:0000314"/>
    <property type="project" value="UniProtKB"/>
</dbReference>
<dbReference type="GO" id="GO:0051260">
    <property type="term" value="P:protein homooligomerization"/>
    <property type="evidence" value="ECO:0000314"/>
    <property type="project" value="UniProtKB"/>
</dbReference>
<dbReference type="GO" id="GO:0009617">
    <property type="term" value="P:response to bacterium"/>
    <property type="evidence" value="ECO:0000270"/>
    <property type="project" value="MGI"/>
</dbReference>
<dbReference type="CDD" id="cd04104">
    <property type="entry name" value="p47_IIGP_like"/>
    <property type="match status" value="1"/>
</dbReference>
<dbReference type="FunFam" id="3.40.50.300:FF:000541">
    <property type="entry name" value="Immunity related GTPase M"/>
    <property type="match status" value="1"/>
</dbReference>
<dbReference type="Gene3D" id="3.40.50.300">
    <property type="entry name" value="P-loop containing nucleotide triphosphate hydrolases"/>
    <property type="match status" value="1"/>
</dbReference>
<dbReference type="InterPro" id="IPR030385">
    <property type="entry name" value="G_IRG_dom"/>
</dbReference>
<dbReference type="InterPro" id="IPR007743">
    <property type="entry name" value="Immunity-related_GTPase-like"/>
</dbReference>
<dbReference type="InterPro" id="IPR051515">
    <property type="entry name" value="IRG"/>
</dbReference>
<dbReference type="InterPro" id="IPR027417">
    <property type="entry name" value="P-loop_NTPase"/>
</dbReference>
<dbReference type="PANTHER" id="PTHR32341:SF15">
    <property type="entry name" value="INTERFERON-GAMMA-INDUCIBLE GTPASE 10-RELATED"/>
    <property type="match status" value="1"/>
</dbReference>
<dbReference type="PANTHER" id="PTHR32341">
    <property type="entry name" value="INTERFERON-INDUCIBLE GTPASE"/>
    <property type="match status" value="1"/>
</dbReference>
<dbReference type="Pfam" id="PF05049">
    <property type="entry name" value="IIGP"/>
    <property type="match status" value="1"/>
</dbReference>
<dbReference type="SUPFAM" id="SSF52540">
    <property type="entry name" value="P-loop containing nucleoside triphosphate hydrolases"/>
    <property type="match status" value="1"/>
</dbReference>
<dbReference type="PROSITE" id="PS51716">
    <property type="entry name" value="G_IRG"/>
    <property type="match status" value="1"/>
</dbReference>
<keyword id="KW-0002">3D-structure</keyword>
<keyword id="KW-0968">Cytoplasmic vesicle</keyword>
<keyword id="KW-0342">GTP-binding</keyword>
<keyword id="KW-0378">Hydrolase</keyword>
<keyword id="KW-0391">Immunity</keyword>
<keyword id="KW-0399">Innate immunity</keyword>
<keyword id="KW-0449">Lipoprotein</keyword>
<keyword id="KW-0472">Membrane</keyword>
<keyword id="KW-0519">Myristate</keyword>
<keyword id="KW-0547">Nucleotide-binding</keyword>
<keyword id="KW-1185">Reference proteome</keyword>
<keyword id="KW-0812">Transmembrane</keyword>
<keyword id="KW-1133">Transmembrane helix</keyword>
<reference key="1">
    <citation type="journal article" date="2006" name="Proc. Natl. Acad. Sci. U.S.A.">
        <title>The p47 GTPases Igtp and Irgb10 map to the Chlamydia trachomatis susceptibility locus Ctrq-3 and mediate cellular resistance in mice.</title>
        <authorList>
            <person name="Bernstein-Hanley I."/>
            <person name="Coers J."/>
            <person name="Balsara Z.R."/>
            <person name="Taylor G.A."/>
            <person name="Starnbach M.N."/>
            <person name="Dietrich W.F."/>
        </authorList>
    </citation>
    <scope>NUCLEOTIDE SEQUENCE [MRNA]</scope>
    <scope>FUNCTION</scope>
    <scope>INDUCTION</scope>
    <source>
        <strain>C3H/HeJ</strain>
        <strain>C57BL/6J</strain>
        <tissue>Spleen</tissue>
    </source>
</reference>
<reference key="2">
    <citation type="journal article" date="2009" name="PLoS Biol.">
        <title>Lineage-specific biology revealed by a finished genome assembly of the mouse.</title>
        <authorList>
            <person name="Church D.M."/>
            <person name="Goodstadt L."/>
            <person name="Hillier L.W."/>
            <person name="Zody M.C."/>
            <person name="Goldstein S."/>
            <person name="She X."/>
            <person name="Bult C.J."/>
            <person name="Agarwala R."/>
            <person name="Cherry J.L."/>
            <person name="DiCuccio M."/>
            <person name="Hlavina W."/>
            <person name="Kapustin Y."/>
            <person name="Meric P."/>
            <person name="Maglott D."/>
            <person name="Birtle Z."/>
            <person name="Marques A.C."/>
            <person name="Graves T."/>
            <person name="Zhou S."/>
            <person name="Teague B."/>
            <person name="Potamousis K."/>
            <person name="Churas C."/>
            <person name="Place M."/>
            <person name="Herschleb J."/>
            <person name="Runnheim R."/>
            <person name="Forrest D."/>
            <person name="Amos-Landgraf J."/>
            <person name="Schwartz D.C."/>
            <person name="Cheng Z."/>
            <person name="Lindblad-Toh K."/>
            <person name="Eichler E.E."/>
            <person name="Ponting C.P."/>
        </authorList>
    </citation>
    <scope>NUCLEOTIDE SEQUENCE [LARGE SCALE GENOMIC DNA]</scope>
    <source>
        <strain>C57BL/6J</strain>
    </source>
</reference>
<reference key="3">
    <citation type="journal article" date="2008" name="J. Immunol.">
        <title>Chlamydia muridarum evades growth restriction by the IFN-gamma-inducible host resistance factor Irgb10.</title>
        <authorList>
            <person name="Coers J."/>
            <person name="Bernstein-Hanley I."/>
            <person name="Grotsky D."/>
            <person name="Parvanova I."/>
            <person name="Howard J.C."/>
            <person name="Taylor G.A."/>
            <person name="Dietrich W.F."/>
            <person name="Starnbach M.N."/>
        </authorList>
    </citation>
    <scope>FUNCTION</scope>
</reference>
<reference key="4">
    <citation type="journal article" date="2010" name="Cell Host Microbe">
        <title>Phosphorylation of immunity-related GTPases by a Toxoplasma gondii-secreted kinase promotes macrophage survival and virulence.</title>
        <authorList>
            <person name="Fentress S.J."/>
            <person name="Behnke M.S."/>
            <person name="Dunay I.R."/>
            <person name="Mashayekhi M."/>
            <person name="Rommereim L.M."/>
            <person name="Fox B.A."/>
            <person name="Bzik D.J."/>
            <person name="Taylor G.A."/>
            <person name="Turk B.E."/>
            <person name="Lichti C.F."/>
            <person name="Townsend R.R."/>
            <person name="Qiu W."/>
            <person name="Hui R."/>
            <person name="Beatty W.L."/>
            <person name="Sibley L.D."/>
        </authorList>
    </citation>
    <scope>PHOSPHORYLATION (MICROBIAL INFECTION)</scope>
</reference>
<reference key="5">
    <citation type="journal article" date="2010" name="Cell. Microbiol.">
        <title>Coordinated loading of IRG resistance GTPases on to the Toxoplasma gondii parasitophorous vacuole.</title>
        <authorList>
            <person name="Khaminets A."/>
            <person name="Hunn J.P."/>
            <person name="Koenen-Waisman S."/>
            <person name="Zhao Y.O."/>
            <person name="Preukschat D."/>
            <person name="Coers J."/>
            <person name="Boyle J.P."/>
            <person name="Ong Y.C."/>
            <person name="Boothroyd J.C."/>
            <person name="Reichmann G."/>
            <person name="Howard J.C."/>
        </authorList>
    </citation>
    <scope>FUNCTION</scope>
</reference>
<reference key="6">
    <citation type="journal article" date="2013" name="PLoS Pathog.">
        <title>IRG and GBP host resistance factors target aberrant, 'non-self' vacuoles characterized by the missing of 'self' IRGM proteins.</title>
        <authorList>
            <person name="Haldar A.K."/>
            <person name="Saka H.A."/>
            <person name="Piro A.S."/>
            <person name="Dunn J.D."/>
            <person name="Henry S.C."/>
            <person name="Taylor G.A."/>
            <person name="Frickel E.M."/>
            <person name="Valdivia R.H."/>
            <person name="Coers J."/>
        </authorList>
    </citation>
    <scope>CATALYTIC ACTIVITY</scope>
    <scope>SUBCELLULAR LOCATION</scope>
    <scope>SUBUNIT</scope>
    <scope>MYRISTOYLATION AT GLY-2</scope>
    <scope>MUTAGENESIS OF LYS-81 AND SER-82</scope>
</reference>
<reference key="7">
    <citation type="journal article" date="2016" name="Cell">
        <title>IRGB10 liberates bacterial ligands for sensing by the AIM2 and caspase-11-NLRP3 inflammasomes.</title>
        <authorList>
            <person name="Man S.M."/>
            <person name="Karki R."/>
            <person name="Sasai M."/>
            <person name="Place D.E."/>
            <person name="Kesavardhana S."/>
            <person name="Temirov J."/>
            <person name="Frase S."/>
            <person name="Zhu Q."/>
            <person name="Malireddi R.K.S."/>
            <person name="Kuriakose T."/>
            <person name="Peters J.L."/>
            <person name="Neale G."/>
            <person name="Brown S.A."/>
            <person name="Yamamoto M."/>
            <person name="Kanneganti T.D."/>
        </authorList>
    </citation>
    <scope>FUNCTION</scope>
    <scope>SUBUNIT</scope>
    <scope>SUBCELLULAR LOCATION</scope>
    <scope>INDUCTION</scope>
</reference>
<reference key="8">
    <citation type="journal article" date="2018" name="Cell. Death. Discov.">
        <title>Guanylate binding proteins facilitate caspase-11-dependent pyroptosis in response to type 3 secretion system-negative Pseudomonas aeruginosa.</title>
        <authorList>
            <person name="Balakrishnan A."/>
            <person name="Karki R."/>
            <person name="Berwin B."/>
            <person name="Yamamoto M."/>
            <person name="Kanneganti T.D."/>
        </authorList>
    </citation>
    <scope>FUNCTION</scope>
</reference>
<reference key="9">
    <citation type="journal article" date="2019" name="Nat. Microbiol.">
        <title>Fungal ligands released by innate immune effectors promote inflammasome activation during Aspergillus fumigatus infection.</title>
        <authorList>
            <person name="Briard B."/>
            <person name="Karki R."/>
            <person name="Malireddi R.K.S."/>
            <person name="Bhattacharya A."/>
            <person name="Place D.E."/>
            <person name="Mavuluri J."/>
            <person name="Peters J.L."/>
            <person name="Vogel P."/>
            <person name="Yamamoto M."/>
            <person name="Kanneganti T.D."/>
        </authorList>
    </citation>
    <scope>FUNCTION</scope>
</reference>
<reference key="10">
    <citation type="journal article" date="2022" name="Eur. J. Immunol.">
        <title>The IFN-inducible GTPase IRGB10 regulates viral replication and inflammasome activation during influenza A virus infection in mice.</title>
        <authorList>
            <person name="Christgen S."/>
            <person name="Place D.E."/>
            <person name="Zheng M."/>
            <person name="Briard B."/>
            <person name="Yamamoto M."/>
            <person name="Kanneganti T.D."/>
        </authorList>
    </citation>
    <scope>FUNCTION</scope>
</reference>
<reference evidence="17" key="11">
    <citation type="journal article" date="2021" name="Commun. Biol.">
        <title>Molecular basis of IRGB10 oligomerization and membrane association for pathogen membrane disruption.</title>
        <authorList>
            <person name="Ha H.J."/>
            <person name="Chun H.L."/>
            <person name="Lee S.Y."/>
            <person name="Jeong J.H."/>
            <person name="Kim Y.G."/>
            <person name="Park H.H."/>
        </authorList>
    </citation>
    <scope>X-RAY CRYSTALLOGRAPHY (2.60 ANGSTROMS) OF 1-406 IN COMPLEX WITH GDP</scope>
    <scope>CATALYTIC ACTIVITY</scope>
    <scope>SUBUNIT</scope>
    <scope>MUTAGENESIS OF THR-132; ASP-185; LYS-193 AND GLU-206</scope>
</reference>
<proteinExistence type="evidence at protein level"/>
<accession>Q0GUM3</accession>
<accession>Q0GUM2</accession>
<gene>
    <name evidence="16" type="primary">Gm12250</name>
    <name evidence="12" type="synonym">Irgb10</name>
</gene>
<protein>
    <recommendedName>
        <fullName evidence="12">Interferon-gamma-inducible GTPase 10</fullName>
        <shortName evidence="12">Irgb10</shortName>
        <ecNumber evidence="10">3.6.5.-</ecNumber>
    </recommendedName>
</protein>